<comment type="function">
    <text evidence="1">Required for Yop secretion. Functions probably as a chaperone which stabilizes YscX within the cell, before its secretion (By similarity).</text>
</comment>
<comment type="subunit">
    <text evidence="1">Binds to YscX.</text>
</comment>
<comment type="subcellular location">
    <subcellularLocation>
        <location evidence="1">Cytoplasm</location>
    </subcellularLocation>
</comment>
<evidence type="ECO:0000250" key="1"/>
<feature type="chain" id="PRO_0000281777" description="Chaperone protein YscY">
    <location>
        <begin position="1"/>
        <end position="114"/>
    </location>
</feature>
<name>YSCY_YERE8</name>
<proteinExistence type="inferred from homology"/>
<protein>
    <recommendedName>
        <fullName>Chaperone protein YscY</fullName>
    </recommendedName>
    <alternativeName>
        <fullName>Yop proteins translocation protein Y</fullName>
    </alternativeName>
</protein>
<reference key="1">
    <citation type="journal article" date="2001" name="Infect. Immun.">
        <title>Complete DNA sequence of Yersinia enterocolitica serotype 0:8 low-calcium-response plasmid reveals a new virulence plasmid-associated replicon.</title>
        <authorList>
            <person name="Snellings N.J."/>
            <person name="Popek M."/>
            <person name="Lindler L.E."/>
        </authorList>
    </citation>
    <scope>NUCLEOTIDE SEQUENCE [GENOMIC DNA]</scope>
</reference>
<reference key="2">
    <citation type="journal article" date="2006" name="PLoS Genet.">
        <title>The complete genome sequence and comparative genome analysis of the high pathogenicity Yersinia enterocolitica strain 8081.</title>
        <authorList>
            <person name="Thomson N.R."/>
            <person name="Howard S."/>
            <person name="Wren B.W."/>
            <person name="Holden M.T.G."/>
            <person name="Crossman L."/>
            <person name="Challis G.L."/>
            <person name="Churcher C."/>
            <person name="Mungall K."/>
            <person name="Brooks K."/>
            <person name="Chillingworth T."/>
            <person name="Feltwell T."/>
            <person name="Abdellah Z."/>
            <person name="Hauser H."/>
            <person name="Jagels K."/>
            <person name="Maddison M."/>
            <person name="Moule S."/>
            <person name="Sanders M."/>
            <person name="Whitehead S."/>
            <person name="Quail M.A."/>
            <person name="Dougan G."/>
            <person name="Parkhill J."/>
            <person name="Prentice M.B."/>
        </authorList>
    </citation>
    <scope>NUCLEOTIDE SEQUENCE [LARGE SCALE GENOMIC DNA]</scope>
    <source>
        <strain>NCTC 13174 / 8081</strain>
    </source>
</reference>
<keyword id="KW-0143">Chaperone</keyword>
<keyword id="KW-0963">Cytoplasm</keyword>
<keyword id="KW-0614">Plasmid</keyword>
<organism>
    <name type="scientific">Yersinia enterocolitica serotype O:8 / biotype 1B (strain NCTC 13174 / 8081)</name>
    <dbReference type="NCBI Taxonomy" id="393305"/>
    <lineage>
        <taxon>Bacteria</taxon>
        <taxon>Pseudomonadati</taxon>
        <taxon>Pseudomonadota</taxon>
        <taxon>Gammaproteobacteria</taxon>
        <taxon>Enterobacterales</taxon>
        <taxon>Yersiniaceae</taxon>
        <taxon>Yersinia</taxon>
    </lineage>
</organism>
<geneLocation type="plasmid">
    <name>pYVe8081</name>
</geneLocation>
<dbReference type="EMBL" id="AF336309">
    <property type="protein sequence ID" value="AAK69217.1"/>
    <property type="molecule type" value="Genomic_DNA"/>
</dbReference>
<dbReference type="EMBL" id="AM286416">
    <property type="protein sequence ID" value="CAL10043.1"/>
    <property type="molecule type" value="Genomic_DNA"/>
</dbReference>
<dbReference type="RefSeq" id="NP_863518.1">
    <property type="nucleotide sequence ID" value="NC_005017.1"/>
</dbReference>
<dbReference type="RefSeq" id="WP_011117636.1">
    <property type="nucleotide sequence ID" value="NC_008791.1"/>
</dbReference>
<dbReference type="RefSeq" id="YP_001004073.1">
    <property type="nucleotide sequence ID" value="NC_008791.1"/>
</dbReference>
<dbReference type="SMR" id="A1JU77"/>
<dbReference type="KEGG" id="yen:YEP0019"/>
<dbReference type="PATRIC" id="fig|393305.7.peg.22"/>
<dbReference type="eggNOG" id="COG0457">
    <property type="taxonomic scope" value="Bacteria"/>
</dbReference>
<dbReference type="HOGENOM" id="CLU_170441_0_0_6"/>
<dbReference type="OrthoDB" id="7026286at2"/>
<dbReference type="PRO" id="PR:A1JU77"/>
<dbReference type="Proteomes" id="UP000000642">
    <property type="component" value="Plasmid pYVe8081"/>
</dbReference>
<dbReference type="GO" id="GO:0005737">
    <property type="term" value="C:cytoplasm"/>
    <property type="evidence" value="ECO:0007669"/>
    <property type="project" value="UniProtKB-SubCell"/>
</dbReference>
<dbReference type="Gene3D" id="1.25.40.10">
    <property type="entry name" value="Tetratricopeptide repeat domain"/>
    <property type="match status" value="1"/>
</dbReference>
<dbReference type="InterPro" id="IPR016684">
    <property type="entry name" value="T3SS_YscY"/>
</dbReference>
<dbReference type="InterPro" id="IPR011990">
    <property type="entry name" value="TPR-like_helical_dom_sf"/>
</dbReference>
<dbReference type="PIRSF" id="PIRSF017117">
    <property type="entry name" value="T3SS_YscY"/>
    <property type="match status" value="1"/>
</dbReference>
<dbReference type="SUPFAM" id="SSF48452">
    <property type="entry name" value="TPR-like"/>
    <property type="match status" value="1"/>
</dbReference>
<accession>A1JU77</accession>
<accession>P21209</accession>
<accession>Q93KU0</accession>
<sequence length="114" mass="13163">MNITLTKRQQEFLLLNGWLQLQCGHAERACILLDALLMLNPEHLAGRRCRLVALLNNNQGERAEKEAQWLISHDPLQAGNWLCLSRAQQLNGDLDKARHAYQHYLELKDHNESL</sequence>
<gene>
    <name type="primary">yscY</name>
    <name type="ordered locus">YEP0019</name>
</gene>